<dbReference type="EC" id="2.7.1.33" evidence="1"/>
<dbReference type="EMBL" id="CP000025">
    <property type="protein sequence ID" value="AAW35032.1"/>
    <property type="molecule type" value="Genomic_DNA"/>
</dbReference>
<dbReference type="RefSeq" id="WP_002860273.1">
    <property type="nucleotide sequence ID" value="NC_003912.7"/>
</dbReference>
<dbReference type="SMR" id="Q5HW73"/>
<dbReference type="DNASU" id="3231205"/>
<dbReference type="KEGG" id="cjr:CJE0443"/>
<dbReference type="HOGENOM" id="CLU_1213471_0_0_7"/>
<dbReference type="UniPathway" id="UPA00241">
    <property type="reaction ID" value="UER00352"/>
</dbReference>
<dbReference type="GO" id="GO:0005737">
    <property type="term" value="C:cytoplasm"/>
    <property type="evidence" value="ECO:0007669"/>
    <property type="project" value="UniProtKB-SubCell"/>
</dbReference>
<dbReference type="GO" id="GO:0005524">
    <property type="term" value="F:ATP binding"/>
    <property type="evidence" value="ECO:0007669"/>
    <property type="project" value="UniProtKB-UniRule"/>
</dbReference>
<dbReference type="GO" id="GO:0046872">
    <property type="term" value="F:metal ion binding"/>
    <property type="evidence" value="ECO:0007669"/>
    <property type="project" value="UniProtKB-KW"/>
</dbReference>
<dbReference type="GO" id="GO:0004594">
    <property type="term" value="F:pantothenate kinase activity"/>
    <property type="evidence" value="ECO:0007669"/>
    <property type="project" value="UniProtKB-UniRule"/>
</dbReference>
<dbReference type="GO" id="GO:0015937">
    <property type="term" value="P:coenzyme A biosynthetic process"/>
    <property type="evidence" value="ECO:0007669"/>
    <property type="project" value="UniProtKB-UniRule"/>
</dbReference>
<dbReference type="CDD" id="cd24015">
    <property type="entry name" value="ASKHA_NBD_PanK-III"/>
    <property type="match status" value="1"/>
</dbReference>
<dbReference type="Gene3D" id="3.30.420.40">
    <property type="match status" value="2"/>
</dbReference>
<dbReference type="HAMAP" id="MF_01274">
    <property type="entry name" value="Pantothen_kinase_3"/>
    <property type="match status" value="1"/>
</dbReference>
<dbReference type="InterPro" id="IPR043129">
    <property type="entry name" value="ATPase_NBD"/>
</dbReference>
<dbReference type="InterPro" id="IPR004619">
    <property type="entry name" value="Type_III_PanK"/>
</dbReference>
<dbReference type="NCBIfam" id="TIGR00671">
    <property type="entry name" value="baf"/>
    <property type="match status" value="1"/>
</dbReference>
<dbReference type="NCBIfam" id="NF009872">
    <property type="entry name" value="PRK13333.1"/>
    <property type="match status" value="1"/>
</dbReference>
<dbReference type="PANTHER" id="PTHR34265">
    <property type="entry name" value="TYPE III PANTOTHENATE KINASE"/>
    <property type="match status" value="1"/>
</dbReference>
<dbReference type="PANTHER" id="PTHR34265:SF1">
    <property type="entry name" value="TYPE III PANTOTHENATE KINASE"/>
    <property type="match status" value="1"/>
</dbReference>
<dbReference type="Pfam" id="PF03309">
    <property type="entry name" value="Pan_kinase"/>
    <property type="match status" value="1"/>
</dbReference>
<dbReference type="SUPFAM" id="SSF53067">
    <property type="entry name" value="Actin-like ATPase domain"/>
    <property type="match status" value="2"/>
</dbReference>
<keyword id="KW-0067">ATP-binding</keyword>
<keyword id="KW-0173">Coenzyme A biosynthesis</keyword>
<keyword id="KW-0963">Cytoplasm</keyword>
<keyword id="KW-0418">Kinase</keyword>
<keyword id="KW-0479">Metal-binding</keyword>
<keyword id="KW-0547">Nucleotide-binding</keyword>
<keyword id="KW-0630">Potassium</keyword>
<keyword id="KW-0808">Transferase</keyword>
<comment type="function">
    <text evidence="1">Catalyzes the phosphorylation of pantothenate (Pan), the first step in CoA biosynthesis.</text>
</comment>
<comment type="catalytic activity">
    <reaction evidence="1">
        <text>(R)-pantothenate + ATP = (R)-4'-phosphopantothenate + ADP + H(+)</text>
        <dbReference type="Rhea" id="RHEA:16373"/>
        <dbReference type="ChEBI" id="CHEBI:10986"/>
        <dbReference type="ChEBI" id="CHEBI:15378"/>
        <dbReference type="ChEBI" id="CHEBI:29032"/>
        <dbReference type="ChEBI" id="CHEBI:30616"/>
        <dbReference type="ChEBI" id="CHEBI:456216"/>
        <dbReference type="EC" id="2.7.1.33"/>
    </reaction>
</comment>
<comment type="cofactor">
    <cofactor evidence="1">
        <name>NH4(+)</name>
        <dbReference type="ChEBI" id="CHEBI:28938"/>
    </cofactor>
    <cofactor evidence="1">
        <name>K(+)</name>
        <dbReference type="ChEBI" id="CHEBI:29103"/>
    </cofactor>
    <text evidence="1">A monovalent cation. Ammonium or potassium.</text>
</comment>
<comment type="pathway">
    <text evidence="1">Cofactor biosynthesis; coenzyme A biosynthesis; CoA from (R)-pantothenate: step 1/5.</text>
</comment>
<comment type="subunit">
    <text evidence="1">Homodimer.</text>
</comment>
<comment type="subcellular location">
    <subcellularLocation>
        <location evidence="1">Cytoplasm</location>
    </subcellularLocation>
</comment>
<comment type="similarity">
    <text evidence="1">Belongs to the type III pantothenate kinase family.</text>
</comment>
<feature type="chain" id="PRO_0000267505" description="Type III pantothenate kinase">
    <location>
        <begin position="1"/>
        <end position="209"/>
    </location>
</feature>
<feature type="active site" description="Proton acceptor" evidence="1">
    <location>
        <position position="74"/>
    </location>
</feature>
<feature type="binding site" evidence="1">
    <location>
        <begin position="5"/>
        <end position="12"/>
    </location>
    <ligand>
        <name>ATP</name>
        <dbReference type="ChEBI" id="CHEBI:30616"/>
    </ligand>
</feature>
<feature type="binding site" evidence="1">
    <location>
        <position position="68"/>
    </location>
    <ligand>
        <name>substrate</name>
    </ligand>
</feature>
<feature type="binding site" evidence="1">
    <location>
        <begin position="72"/>
        <end position="75"/>
    </location>
    <ligand>
        <name>substrate</name>
    </ligand>
</feature>
<feature type="binding site" evidence="1">
    <location>
        <position position="89"/>
    </location>
    <ligand>
        <name>K(+)</name>
        <dbReference type="ChEBI" id="CHEBI:29103"/>
    </ligand>
</feature>
<feature type="binding site" evidence="1">
    <location>
        <position position="92"/>
    </location>
    <ligand>
        <name>ATP</name>
        <dbReference type="ChEBI" id="CHEBI:30616"/>
    </ligand>
</feature>
<feature type="binding site" evidence="1">
    <location>
        <position position="144"/>
    </location>
    <ligand>
        <name>substrate</name>
    </ligand>
</feature>
<gene>
    <name evidence="1" type="primary">coaX</name>
    <name type="ordered locus">CJE0443</name>
</gene>
<proteinExistence type="inferred from homology"/>
<reference key="1">
    <citation type="journal article" date="2005" name="PLoS Biol.">
        <title>Major structural differences and novel potential virulence mechanisms from the genomes of multiple Campylobacter species.</title>
        <authorList>
            <person name="Fouts D.E."/>
            <person name="Mongodin E.F."/>
            <person name="Mandrell R.E."/>
            <person name="Miller W.G."/>
            <person name="Rasko D.A."/>
            <person name="Ravel J."/>
            <person name="Brinkac L.M."/>
            <person name="DeBoy R.T."/>
            <person name="Parker C.T."/>
            <person name="Daugherty S.C."/>
            <person name="Dodson R.J."/>
            <person name="Durkin A.S."/>
            <person name="Madupu R."/>
            <person name="Sullivan S.A."/>
            <person name="Shetty J.U."/>
            <person name="Ayodeji M.A."/>
            <person name="Shvartsbeyn A."/>
            <person name="Schatz M.C."/>
            <person name="Badger J.H."/>
            <person name="Fraser C.M."/>
            <person name="Nelson K.E."/>
        </authorList>
    </citation>
    <scope>NUCLEOTIDE SEQUENCE [LARGE SCALE GENOMIC DNA]</scope>
    <source>
        <strain>RM1221</strain>
    </source>
</reference>
<sequence>MLLCDIGNSNANFLDDNKYFTLSIDQFLEFKNEQKIFYINVNEHLKEHLKNQKKFINLEPYFLFDTIYQGLGIDRIAACYTIEDGVVVDAGSAITIDIISNSIHLGGFILPGIANYKKIYSHISPRLKSEFNTQVSLDAFPQKTMDALSYGVFKGIYLLIKDAAQNKKLYFTGGDGQFLANYFDHAIYDKLLIFRGMKKIIKENPNLLY</sequence>
<evidence type="ECO:0000255" key="1">
    <source>
        <dbReference type="HAMAP-Rule" id="MF_01274"/>
    </source>
</evidence>
<protein>
    <recommendedName>
        <fullName evidence="1">Type III pantothenate kinase</fullName>
        <ecNumber evidence="1">2.7.1.33</ecNumber>
    </recommendedName>
    <alternativeName>
        <fullName evidence="1">PanK-III</fullName>
    </alternativeName>
    <alternativeName>
        <fullName evidence="1">Pantothenic acid kinase</fullName>
    </alternativeName>
</protein>
<name>COAX_CAMJR</name>
<organism>
    <name type="scientific">Campylobacter jejuni (strain RM1221)</name>
    <dbReference type="NCBI Taxonomy" id="195099"/>
    <lineage>
        <taxon>Bacteria</taxon>
        <taxon>Pseudomonadati</taxon>
        <taxon>Campylobacterota</taxon>
        <taxon>Epsilonproteobacteria</taxon>
        <taxon>Campylobacterales</taxon>
        <taxon>Campylobacteraceae</taxon>
        <taxon>Campylobacter</taxon>
    </lineage>
</organism>
<accession>Q5HW73</accession>